<organism>
    <name type="scientific">Gallus gallus</name>
    <name type="common">Chicken</name>
    <dbReference type="NCBI Taxonomy" id="9031"/>
    <lineage>
        <taxon>Eukaryota</taxon>
        <taxon>Metazoa</taxon>
        <taxon>Chordata</taxon>
        <taxon>Craniata</taxon>
        <taxon>Vertebrata</taxon>
        <taxon>Euteleostomi</taxon>
        <taxon>Archelosauria</taxon>
        <taxon>Archosauria</taxon>
        <taxon>Dinosauria</taxon>
        <taxon>Saurischia</taxon>
        <taxon>Theropoda</taxon>
        <taxon>Coelurosauria</taxon>
        <taxon>Aves</taxon>
        <taxon>Neognathae</taxon>
        <taxon>Galloanserae</taxon>
        <taxon>Galliformes</taxon>
        <taxon>Phasianidae</taxon>
        <taxon>Phasianinae</taxon>
        <taxon>Gallus</taxon>
    </lineage>
</organism>
<proteinExistence type="evidence at transcript level"/>
<comment type="function">
    <text evidence="2">E3 ubiquitin-protein ligase which accepts ubiquitin from an E2 ubiquitin-conjugating enzyme in the form of a thioester and then directly transfers the ubiquitin to targeted substrates. Essential in early embryonic development to prevent apoptotic death.</text>
</comment>
<comment type="catalytic activity">
    <reaction>
        <text>S-ubiquitinyl-[E2 ubiquitin-conjugating enzyme]-L-cysteine + [acceptor protein]-L-lysine = [E2 ubiquitin-conjugating enzyme]-L-cysteine + N(6)-ubiquitinyl-[acceptor protein]-L-lysine.</text>
        <dbReference type="EC" id="2.3.2.26"/>
    </reaction>
</comment>
<comment type="pathway">
    <text>Protein modification; protein ubiquitination.</text>
</comment>
<comment type="subcellular location">
    <subcellularLocation>
        <location evidence="2">Nucleus</location>
        <location evidence="2">Nucleolus</location>
    </subcellularLocation>
    <subcellularLocation>
        <location evidence="2">Cytoplasm</location>
    </subcellularLocation>
    <text evidence="2">Shuttles between the nucleus and the cytoplasm. In the nucleus, delocalizes from the nucleolus to the nucleoplasm in response to DNA damage.</text>
</comment>
<comment type="domain">
    <text evidence="1">Ubiquitin ligase activity is mediated by two distinct domains, PHD-type zinc fingers 2 and 3. The use of these distinct domains may allow ubiquitination of different targets by each domain. The HECT domain is catalytically inactive and does not contribute to this activity (By similarity).</text>
</comment>
<keyword id="KW-0053">Apoptosis</keyword>
<keyword id="KW-0963">Cytoplasm</keyword>
<keyword id="KW-0217">Developmental protein</keyword>
<keyword id="KW-0479">Metal-binding</keyword>
<keyword id="KW-0539">Nucleus</keyword>
<keyword id="KW-1185">Reference proteome</keyword>
<keyword id="KW-0677">Repeat</keyword>
<keyword id="KW-0808">Transferase</keyword>
<keyword id="KW-0833">Ubl conjugation pathway</keyword>
<keyword id="KW-0862">Zinc</keyword>
<keyword id="KW-0863">Zinc-finger</keyword>
<dbReference type="EC" id="2.3.2.26"/>
<dbReference type="EMBL" id="AJ851399">
    <property type="protein sequence ID" value="CAH65033.1"/>
    <property type="molecule type" value="mRNA"/>
</dbReference>
<dbReference type="RefSeq" id="NP_001012918.1">
    <property type="nucleotide sequence ID" value="NM_001012900.1"/>
</dbReference>
<dbReference type="SMR" id="Q5F4A1"/>
<dbReference type="FunCoup" id="Q5F4A1">
    <property type="interactions" value="1948"/>
</dbReference>
<dbReference type="STRING" id="9031.ENSGALP00000016094"/>
<dbReference type="PaxDb" id="9031-ENSGALP00000016094"/>
<dbReference type="GeneID" id="423305"/>
<dbReference type="KEGG" id="gga:423305"/>
<dbReference type="CTD" id="55632"/>
<dbReference type="VEuPathDB" id="HostDB:geneid_423305"/>
<dbReference type="eggNOG" id="KOG1084">
    <property type="taxonomic scope" value="Eukaryota"/>
</dbReference>
<dbReference type="InParanoid" id="Q5F4A1"/>
<dbReference type="OrthoDB" id="2384350at2759"/>
<dbReference type="PhylomeDB" id="Q5F4A1"/>
<dbReference type="UniPathway" id="UPA00143"/>
<dbReference type="PRO" id="PR:Q5F4A1"/>
<dbReference type="Proteomes" id="UP000000539">
    <property type="component" value="Unassembled WGS sequence"/>
</dbReference>
<dbReference type="GO" id="GO:0005737">
    <property type="term" value="C:cytoplasm"/>
    <property type="evidence" value="ECO:0007669"/>
    <property type="project" value="UniProtKB-SubCell"/>
</dbReference>
<dbReference type="GO" id="GO:0005730">
    <property type="term" value="C:nucleolus"/>
    <property type="evidence" value="ECO:0007669"/>
    <property type="project" value="UniProtKB-SubCell"/>
</dbReference>
<dbReference type="GO" id="GO:0005634">
    <property type="term" value="C:nucleus"/>
    <property type="evidence" value="ECO:0000318"/>
    <property type="project" value="GO_Central"/>
</dbReference>
<dbReference type="GO" id="GO:0004842">
    <property type="term" value="F:ubiquitin-protein transferase activity"/>
    <property type="evidence" value="ECO:0007669"/>
    <property type="project" value="InterPro"/>
</dbReference>
<dbReference type="GO" id="GO:0008270">
    <property type="term" value="F:zinc ion binding"/>
    <property type="evidence" value="ECO:0007669"/>
    <property type="project" value="UniProtKB-KW"/>
</dbReference>
<dbReference type="GO" id="GO:0006915">
    <property type="term" value="P:apoptotic process"/>
    <property type="evidence" value="ECO:0007669"/>
    <property type="project" value="UniProtKB-KW"/>
</dbReference>
<dbReference type="GO" id="GO:0016567">
    <property type="term" value="P:protein ubiquitination"/>
    <property type="evidence" value="ECO:0007669"/>
    <property type="project" value="UniProtKB-UniPathway"/>
</dbReference>
<dbReference type="CDD" id="cd15669">
    <property type="entry name" value="ePHD_PHF7_G2E3_like"/>
    <property type="match status" value="1"/>
</dbReference>
<dbReference type="CDD" id="cd15496">
    <property type="entry name" value="PHD_PHF7_G2E3_like"/>
    <property type="match status" value="1"/>
</dbReference>
<dbReference type="FunFam" id="3.30.40.10:FF:000132">
    <property type="entry name" value="G2/M phase-specific E3 ubiquitin-protein ligase"/>
    <property type="match status" value="1"/>
</dbReference>
<dbReference type="Gene3D" id="3.30.2410.10">
    <property type="entry name" value="Hect, E3 ligase catalytic domain"/>
    <property type="match status" value="1"/>
</dbReference>
<dbReference type="Gene3D" id="3.90.1750.10">
    <property type="entry name" value="Hect, E3 ligase catalytic domains"/>
    <property type="match status" value="1"/>
</dbReference>
<dbReference type="Gene3D" id="3.30.40.10">
    <property type="entry name" value="Zinc/RING finger domain, C3HC4 (zinc finger)"/>
    <property type="match status" value="2"/>
</dbReference>
<dbReference type="InterPro" id="IPR034732">
    <property type="entry name" value="EPHD"/>
</dbReference>
<dbReference type="InterPro" id="IPR000569">
    <property type="entry name" value="HECT_dom"/>
</dbReference>
<dbReference type="InterPro" id="IPR035983">
    <property type="entry name" value="Hect_E3_ubiquitin_ligase"/>
</dbReference>
<dbReference type="InterPro" id="IPR051188">
    <property type="entry name" value="PHD-type_Zinc_Finger"/>
</dbReference>
<dbReference type="InterPro" id="IPR042013">
    <property type="entry name" value="PHF7/G2E3_ePHD"/>
</dbReference>
<dbReference type="InterPro" id="IPR042012">
    <property type="entry name" value="PHF7/G2E3_PHD"/>
</dbReference>
<dbReference type="InterPro" id="IPR011011">
    <property type="entry name" value="Znf_FYVE_PHD"/>
</dbReference>
<dbReference type="InterPro" id="IPR001965">
    <property type="entry name" value="Znf_PHD"/>
</dbReference>
<dbReference type="InterPro" id="IPR013083">
    <property type="entry name" value="Znf_RING/FYVE/PHD"/>
</dbReference>
<dbReference type="PANTHER" id="PTHR12420:SF37">
    <property type="entry name" value="G2_M PHASE-SPECIFIC E3 UBIQUITIN-PROTEIN LIGASE"/>
    <property type="match status" value="1"/>
</dbReference>
<dbReference type="PANTHER" id="PTHR12420">
    <property type="entry name" value="PHD FINGER PROTEIN"/>
    <property type="match status" value="1"/>
</dbReference>
<dbReference type="Pfam" id="PF00632">
    <property type="entry name" value="HECT"/>
    <property type="match status" value="1"/>
</dbReference>
<dbReference type="Pfam" id="PF13771">
    <property type="entry name" value="zf-HC5HC2H"/>
    <property type="match status" value="1"/>
</dbReference>
<dbReference type="SMART" id="SM00119">
    <property type="entry name" value="HECTc"/>
    <property type="match status" value="1"/>
</dbReference>
<dbReference type="SMART" id="SM00249">
    <property type="entry name" value="PHD"/>
    <property type="match status" value="3"/>
</dbReference>
<dbReference type="SUPFAM" id="SSF57903">
    <property type="entry name" value="FYVE/PHD zinc finger"/>
    <property type="match status" value="1"/>
</dbReference>
<dbReference type="SUPFAM" id="SSF56204">
    <property type="entry name" value="Hect, E3 ligase catalytic domain"/>
    <property type="match status" value="1"/>
</dbReference>
<dbReference type="PROSITE" id="PS51805">
    <property type="entry name" value="EPHD"/>
    <property type="match status" value="1"/>
</dbReference>
<protein>
    <recommendedName>
        <fullName>G2/M phase-specific E3 ubiquitin-protein ligase</fullName>
        <ecNumber>2.3.2.26</ecNumber>
    </recommendedName>
    <alternativeName>
        <fullName>G2/M phase-specific HECT-type E3 ubiquitin transferase</fullName>
    </alternativeName>
</protein>
<evidence type="ECO:0000250" key="1"/>
<evidence type="ECO:0000250" key="2">
    <source>
        <dbReference type="UniProtKB" id="Q7L622"/>
    </source>
</evidence>
<evidence type="ECO:0000255" key="3">
    <source>
        <dbReference type="PROSITE-ProRule" id="PRU01146"/>
    </source>
</evidence>
<name>G2E3_CHICK</name>
<sequence length="742" mass="84905">MSENNFDIQSPPCVLCGWTDNCPEKYGEKRTYVEYNLTLHNYCLLMSSGIWQRGEENEGVDGFLIEDIRKEVNRAARLMCNICRKKGASIGCVAPKCKRSYHFPCGLQKECVFQFMEDFRSYCWEHKPVQIFSDKESREPSQCTICLDLVEHLPLYSVLRSPCCKNTWFHRECLQYQALSAGIFFFRCAVCNNKDKFQKEMLRMGIHIPEKDASWELEDNAYQDLLQCYQHCDIRRCLCKNGRDYNKPDSKWEIKRCQSCGSRGTHLACSSIKSWEQNWECVECRSIFAKGKYSKRKKHSLAPSEKMDGTTCLLEEPSPKLPRQSPGSQRNCLLQSPKIICQNNLSPCSLLELPTSNRVAMSLSPLMSNRNCSLRKKHLRMQRKEASNILKELKQQINTKTTRLNINTENIWNSALKGFRQRNFRPTNTIEVKFTNCKNRVKTDSFTGSKHLFFHLLMLHIQNSSLFEGSSAKNLSVDPQALKENLYFEAGKMIAVSLVHGGPSPGFFSKILFDCLVYGPENVKPNLDDVADAGVAQTIKKIKYSESLSSLQSTVRDCYDFLAAAGCLRPITSLRDKDMLVNDLLIHHVIKRIISPLESFRQGLKTLGLLEKMEMHQDAFSSLFCHKPENLSAEALCDLFTIHSSPDVNKVGAADFWMGYLQDVESGESVVTLQDILFFVTGCSSIPPIGFDPEPTIKFLPVHYPIGNRLLNCLELPITRTYENFKNKMEFTIRSTLRGERE</sequence>
<reference key="1">
    <citation type="journal article" date="2005" name="Genome Biol.">
        <title>Full-length cDNAs from chicken bursal lymphocytes to facilitate gene function analysis.</title>
        <authorList>
            <person name="Caldwell R.B."/>
            <person name="Kierzek A.M."/>
            <person name="Arakawa H."/>
            <person name="Bezzubov Y."/>
            <person name="Zaim J."/>
            <person name="Fiedler P."/>
            <person name="Kutter S."/>
            <person name="Blagodatski A."/>
            <person name="Kostovska D."/>
            <person name="Koter M."/>
            <person name="Plachy J."/>
            <person name="Carninci P."/>
            <person name="Hayashizaki Y."/>
            <person name="Buerstedde J.-M."/>
        </authorList>
    </citation>
    <scope>NUCLEOTIDE SEQUENCE [LARGE SCALE MRNA]</scope>
    <source>
        <strain>CB</strain>
        <tissue>Bursa of Fabricius</tissue>
    </source>
</reference>
<feature type="chain" id="PRO_0000248346" description="G2/M phase-specific E3 ubiquitin-protein ligase">
    <location>
        <begin position="1"/>
        <end position="742"/>
    </location>
</feature>
<feature type="domain" description="HECT">
    <location>
        <begin position="417"/>
        <end position="742"/>
    </location>
</feature>
<feature type="zinc finger region" description="C2HC pre-PHD-type" evidence="3">
    <location>
        <begin position="10"/>
        <end position="50"/>
    </location>
</feature>
<feature type="zinc finger region" description="PHD-type 1" evidence="3">
    <location>
        <begin position="78"/>
        <end position="127"/>
    </location>
</feature>
<feature type="zinc finger region" description="PHD-type 2; degenerate">
    <location>
        <begin position="142"/>
        <end position="192"/>
    </location>
</feature>
<feature type="zinc finger region" description="PHD-type 3">
    <location>
        <begin position="236"/>
        <end position="285"/>
    </location>
</feature>
<gene>
    <name type="primary">G2E3</name>
    <name type="ORF">RCJMB04_1m6</name>
</gene>
<accession>Q5F4A1</accession>